<gene>
    <name evidence="1" type="primary">nsrR</name>
    <name type="ordered locus">SF4333</name>
    <name type="ordered locus">S4601</name>
</gene>
<name>NSRR_SHIFL</name>
<feature type="chain" id="PRO_0000109558" description="HTH-type transcriptional repressor NsrR">
    <location>
        <begin position="1"/>
        <end position="141"/>
    </location>
</feature>
<feature type="domain" description="HTH rrf2-type" evidence="1">
    <location>
        <begin position="2"/>
        <end position="129"/>
    </location>
</feature>
<feature type="DNA-binding region" description="H-T-H motif" evidence="1">
    <location>
        <begin position="28"/>
        <end position="51"/>
    </location>
</feature>
<feature type="binding site" evidence="1">
    <location>
        <position position="91"/>
    </location>
    <ligand>
        <name>[2Fe-2S] cluster</name>
        <dbReference type="ChEBI" id="CHEBI:190135"/>
    </ligand>
</feature>
<feature type="binding site" evidence="1">
    <location>
        <position position="96"/>
    </location>
    <ligand>
        <name>[2Fe-2S] cluster</name>
        <dbReference type="ChEBI" id="CHEBI:190135"/>
    </ligand>
</feature>
<feature type="binding site" evidence="1">
    <location>
        <position position="102"/>
    </location>
    <ligand>
        <name>[2Fe-2S] cluster</name>
        <dbReference type="ChEBI" id="CHEBI:190135"/>
    </ligand>
</feature>
<keyword id="KW-0001">2Fe-2S</keyword>
<keyword id="KW-0238">DNA-binding</keyword>
<keyword id="KW-0408">Iron</keyword>
<keyword id="KW-0411">Iron-sulfur</keyword>
<keyword id="KW-0479">Metal-binding</keyword>
<keyword id="KW-1185">Reference proteome</keyword>
<keyword id="KW-0678">Repressor</keyword>
<keyword id="KW-0804">Transcription</keyword>
<keyword id="KW-0805">Transcription regulation</keyword>
<comment type="function">
    <text evidence="1">Nitric oxide-sensitive repressor of genes involved in protecting the cell against nitrosative stress. May require iron for activity.</text>
</comment>
<comment type="cofactor">
    <cofactor evidence="1">
        <name>[2Fe-2S] cluster</name>
        <dbReference type="ChEBI" id="CHEBI:190135"/>
    </cofactor>
    <text evidence="1">Binds 1 [2Fe-2S] cluster per subunit.</text>
</comment>
<protein>
    <recommendedName>
        <fullName evidence="1">HTH-type transcriptional repressor NsrR</fullName>
    </recommendedName>
</protein>
<dbReference type="EMBL" id="D11024">
    <property type="protein sequence ID" value="BAA01776.1"/>
    <property type="molecule type" value="Genomic_DNA"/>
</dbReference>
<dbReference type="EMBL" id="AE005674">
    <property type="protein sequence ID" value="AAN45750.1"/>
    <property type="molecule type" value="Genomic_DNA"/>
</dbReference>
<dbReference type="EMBL" id="AE014073">
    <property type="protein sequence ID" value="AAP19533.1"/>
    <property type="molecule type" value="Genomic_DNA"/>
</dbReference>
<dbReference type="RefSeq" id="WP_001177639.1">
    <property type="nucleotide sequence ID" value="NZ_WPGW01000048.1"/>
</dbReference>
<dbReference type="SMR" id="P0AF66"/>
<dbReference type="STRING" id="198214.SF4333"/>
<dbReference type="PaxDb" id="198214-SF4333"/>
<dbReference type="GeneID" id="93777643"/>
<dbReference type="KEGG" id="sfl:SF4333"/>
<dbReference type="KEGG" id="sfx:S4601"/>
<dbReference type="PATRIC" id="fig|198214.7.peg.5107"/>
<dbReference type="HOGENOM" id="CLU_107144_2_1_6"/>
<dbReference type="Proteomes" id="UP000001006">
    <property type="component" value="Chromosome"/>
</dbReference>
<dbReference type="Proteomes" id="UP000002673">
    <property type="component" value="Chromosome"/>
</dbReference>
<dbReference type="GO" id="GO:0005829">
    <property type="term" value="C:cytosol"/>
    <property type="evidence" value="ECO:0007669"/>
    <property type="project" value="TreeGrafter"/>
</dbReference>
<dbReference type="GO" id="GO:0051537">
    <property type="term" value="F:2 iron, 2 sulfur cluster binding"/>
    <property type="evidence" value="ECO:0007669"/>
    <property type="project" value="UniProtKB-KW"/>
</dbReference>
<dbReference type="GO" id="GO:0003700">
    <property type="term" value="F:DNA-binding transcription factor activity"/>
    <property type="evidence" value="ECO:0007669"/>
    <property type="project" value="UniProtKB-UniRule"/>
</dbReference>
<dbReference type="GO" id="GO:0003690">
    <property type="term" value="F:double-stranded DNA binding"/>
    <property type="evidence" value="ECO:0007669"/>
    <property type="project" value="UniProtKB-UniRule"/>
</dbReference>
<dbReference type="GO" id="GO:0005506">
    <property type="term" value="F:iron ion binding"/>
    <property type="evidence" value="ECO:0007669"/>
    <property type="project" value="UniProtKB-UniRule"/>
</dbReference>
<dbReference type="GO" id="GO:0045892">
    <property type="term" value="P:negative regulation of DNA-templated transcription"/>
    <property type="evidence" value="ECO:0007669"/>
    <property type="project" value="InterPro"/>
</dbReference>
<dbReference type="FunFam" id="1.10.10.10:FF:000105">
    <property type="entry name" value="HTH-type transcriptional repressor NsrR"/>
    <property type="match status" value="1"/>
</dbReference>
<dbReference type="Gene3D" id="1.10.10.10">
    <property type="entry name" value="Winged helix-like DNA-binding domain superfamily/Winged helix DNA-binding domain"/>
    <property type="match status" value="1"/>
</dbReference>
<dbReference type="HAMAP" id="MF_01177">
    <property type="entry name" value="HTH_type_NsrR"/>
    <property type="match status" value="1"/>
</dbReference>
<dbReference type="InterPro" id="IPR030489">
    <property type="entry name" value="TR_Rrf2-type_CS"/>
</dbReference>
<dbReference type="InterPro" id="IPR000944">
    <property type="entry name" value="Tscrpt_reg_Rrf2"/>
</dbReference>
<dbReference type="InterPro" id="IPR023761">
    <property type="entry name" value="Tscrpt_rep_HTH_NsrR"/>
</dbReference>
<dbReference type="InterPro" id="IPR036388">
    <property type="entry name" value="WH-like_DNA-bd_sf"/>
</dbReference>
<dbReference type="InterPro" id="IPR036390">
    <property type="entry name" value="WH_DNA-bd_sf"/>
</dbReference>
<dbReference type="NCBIfam" id="NF008240">
    <property type="entry name" value="PRK11014.1"/>
    <property type="match status" value="1"/>
</dbReference>
<dbReference type="NCBIfam" id="TIGR00738">
    <property type="entry name" value="rrf2_super"/>
    <property type="match status" value="1"/>
</dbReference>
<dbReference type="PANTHER" id="PTHR33221:SF4">
    <property type="entry name" value="HTH-TYPE TRANSCRIPTIONAL REPRESSOR NSRR"/>
    <property type="match status" value="1"/>
</dbReference>
<dbReference type="PANTHER" id="PTHR33221">
    <property type="entry name" value="WINGED HELIX-TURN-HELIX TRANSCRIPTIONAL REGULATOR, RRF2 FAMILY"/>
    <property type="match status" value="1"/>
</dbReference>
<dbReference type="Pfam" id="PF02082">
    <property type="entry name" value="Rrf2"/>
    <property type="match status" value="1"/>
</dbReference>
<dbReference type="SUPFAM" id="SSF46785">
    <property type="entry name" value="Winged helix' DNA-binding domain"/>
    <property type="match status" value="1"/>
</dbReference>
<dbReference type="PROSITE" id="PS01332">
    <property type="entry name" value="HTH_RRF2_1"/>
    <property type="match status" value="1"/>
</dbReference>
<dbReference type="PROSITE" id="PS51197">
    <property type="entry name" value="HTH_RRF2_2"/>
    <property type="match status" value="1"/>
</dbReference>
<organism>
    <name type="scientific">Shigella flexneri</name>
    <dbReference type="NCBI Taxonomy" id="623"/>
    <lineage>
        <taxon>Bacteria</taxon>
        <taxon>Pseudomonadati</taxon>
        <taxon>Pseudomonadota</taxon>
        <taxon>Gammaproteobacteria</taxon>
        <taxon>Enterobacterales</taxon>
        <taxon>Enterobacteriaceae</taxon>
        <taxon>Shigella</taxon>
    </lineage>
</organism>
<evidence type="ECO:0000255" key="1">
    <source>
        <dbReference type="HAMAP-Rule" id="MF_01177"/>
    </source>
</evidence>
<reference key="1">
    <citation type="journal article" date="1992" name="J. Bacteriol.">
        <title>vacB, a novel chromosomal gene required for expression of virulence genes on the large plasmid of Shigella flexneri.</title>
        <authorList>
            <person name="Tobe T."/>
            <person name="Sasakawa C."/>
            <person name="Okada N."/>
            <person name="Honma Y."/>
            <person name="Yoshikawa M."/>
        </authorList>
    </citation>
    <scope>NUCLEOTIDE SEQUENCE [GENOMIC DNA]</scope>
    <source>
        <strain>YSH6000 / Serotype 2a</strain>
    </source>
</reference>
<reference key="2">
    <citation type="journal article" date="2002" name="Nucleic Acids Res.">
        <title>Genome sequence of Shigella flexneri 2a: insights into pathogenicity through comparison with genomes of Escherichia coli K12 and O157.</title>
        <authorList>
            <person name="Jin Q."/>
            <person name="Yuan Z."/>
            <person name="Xu J."/>
            <person name="Wang Y."/>
            <person name="Shen Y."/>
            <person name="Lu W."/>
            <person name="Wang J."/>
            <person name="Liu H."/>
            <person name="Yang J."/>
            <person name="Yang F."/>
            <person name="Zhang X."/>
            <person name="Zhang J."/>
            <person name="Yang G."/>
            <person name="Wu H."/>
            <person name="Qu D."/>
            <person name="Dong J."/>
            <person name="Sun L."/>
            <person name="Xue Y."/>
            <person name="Zhao A."/>
            <person name="Gao Y."/>
            <person name="Zhu J."/>
            <person name="Kan B."/>
            <person name="Ding K."/>
            <person name="Chen S."/>
            <person name="Cheng H."/>
            <person name="Yao Z."/>
            <person name="He B."/>
            <person name="Chen R."/>
            <person name="Ma D."/>
            <person name="Qiang B."/>
            <person name="Wen Y."/>
            <person name="Hou Y."/>
            <person name="Yu J."/>
        </authorList>
    </citation>
    <scope>NUCLEOTIDE SEQUENCE [LARGE SCALE GENOMIC DNA]</scope>
    <source>
        <strain>301 / Serotype 2a</strain>
    </source>
</reference>
<reference key="3">
    <citation type="journal article" date="2003" name="Infect. Immun.">
        <title>Complete genome sequence and comparative genomics of Shigella flexneri serotype 2a strain 2457T.</title>
        <authorList>
            <person name="Wei J."/>
            <person name="Goldberg M.B."/>
            <person name="Burland V."/>
            <person name="Venkatesan M.M."/>
            <person name="Deng W."/>
            <person name="Fournier G."/>
            <person name="Mayhew G.F."/>
            <person name="Plunkett G. III"/>
            <person name="Rose D.J."/>
            <person name="Darling A."/>
            <person name="Mau B."/>
            <person name="Perna N.T."/>
            <person name="Payne S.M."/>
            <person name="Runyen-Janecky L.J."/>
            <person name="Zhou S."/>
            <person name="Schwartz D.C."/>
            <person name="Blattner F.R."/>
        </authorList>
    </citation>
    <scope>NUCLEOTIDE SEQUENCE [LARGE SCALE GENOMIC DNA]</scope>
    <source>
        <strain>ATCC 700930 / 2457T / Serotype 2a</strain>
    </source>
</reference>
<sequence>MQLTSFTDYGLRALIYMASLPEGRMTSISEVTDVYGVSRNHMVKIINQLSRAGYVTAVRGKNGGIRLGKPASAIRIGDVVRELEPLSLVNCSSEFCHITPACRLKQALSKAVQSFLTELDNYTLADLVEENQPLYKLLLVE</sequence>
<accession>P0AF66</accession>
<accession>P21498</accession>
<accession>P72442</accession>
<proteinExistence type="inferred from homology"/>